<sequence length="401" mass="44285">MALVSQARSLGKYFLLFDNLLVVLGFFVVFPLISIRFVDQLGWAALVVGLALGLRQLVQQGLGIFGGAIADRFGAKPMIVTGMLMRAAGFALMAMADEPWILWLACALSGLGGTLFDPPRTALVIKLTRPHERGRFYSLLMMQDSAGAVIGALIGSWLLQYDFHFVCWTGAAIFVLAAGWNAWLLPAYRISTVRAPMKEGLMRVLRDRRFVTYVLTLTGYYMLAVQVMLMLPIVVNELAGSPAAVKWMYAIEAALSLTLLYPLARWSEKRFSLEQRLMAGLLIMTLSLFPIGMITHLQTLFMFICFFYMGSILAEPARETLGASLADSRARGSYMGFSRLGLALGGALGYTGGGWMYDTGKTLDMPELPWFLLGIIGLITLAGLYWQFNRRRIESAMLSSS</sequence>
<proteinExistence type="inferred from homology"/>
<feature type="chain" id="PRO_0000173353" description="Multidrug resistance protein MdtH">
    <location>
        <begin position="1"/>
        <end position="401"/>
    </location>
</feature>
<feature type="transmembrane region" description="Helical" evidence="1">
    <location>
        <begin position="13"/>
        <end position="33"/>
    </location>
</feature>
<feature type="transmembrane region" description="Helical" evidence="1">
    <location>
        <begin position="34"/>
        <end position="54"/>
    </location>
</feature>
<feature type="transmembrane region" description="Helical" evidence="1">
    <location>
        <begin position="99"/>
        <end position="116"/>
    </location>
</feature>
<feature type="transmembrane region" description="Helical" evidence="1">
    <location>
        <begin position="139"/>
        <end position="159"/>
    </location>
</feature>
<feature type="transmembrane region" description="Helical" evidence="1">
    <location>
        <begin position="165"/>
        <end position="185"/>
    </location>
</feature>
<feature type="transmembrane region" description="Helical" evidence="1">
    <location>
        <begin position="214"/>
        <end position="234"/>
    </location>
</feature>
<feature type="transmembrane region" description="Helical" evidence="1">
    <location>
        <begin position="243"/>
        <end position="263"/>
    </location>
</feature>
<feature type="transmembrane region" description="Helical" evidence="1">
    <location>
        <begin position="277"/>
        <end position="297"/>
    </location>
</feature>
<feature type="transmembrane region" description="Helical" evidence="1">
    <location>
        <begin position="299"/>
        <end position="319"/>
    </location>
</feature>
<feature type="transmembrane region" description="Helical" evidence="1">
    <location>
        <begin position="340"/>
        <end position="360"/>
    </location>
</feature>
<feature type="transmembrane region" description="Helical" evidence="1">
    <location>
        <begin position="368"/>
        <end position="388"/>
    </location>
</feature>
<evidence type="ECO:0000255" key="1">
    <source>
        <dbReference type="HAMAP-Rule" id="MF_01529"/>
    </source>
</evidence>
<comment type="subcellular location">
    <subcellularLocation>
        <location evidence="1">Cell inner membrane</location>
        <topology evidence="1">Multi-pass membrane protein</topology>
    </subcellularLocation>
</comment>
<comment type="similarity">
    <text evidence="1">Belongs to the major facilitator superfamily. DHA1 family. MdtH (TC 2.A.1.2.21) subfamily.</text>
</comment>
<reference key="1">
    <citation type="journal article" date="2004" name="Proc. Natl. Acad. Sci. U.S.A.">
        <title>Insights into the evolution of Yersinia pestis through whole-genome comparison with Yersinia pseudotuberculosis.</title>
        <authorList>
            <person name="Chain P.S.G."/>
            <person name="Carniel E."/>
            <person name="Larimer F.W."/>
            <person name="Lamerdin J."/>
            <person name="Stoutland P.O."/>
            <person name="Regala W.M."/>
            <person name="Georgescu A.M."/>
            <person name="Vergez L.M."/>
            <person name="Land M.L."/>
            <person name="Motin V.L."/>
            <person name="Brubaker R.R."/>
            <person name="Fowler J."/>
            <person name="Hinnebusch J."/>
            <person name="Marceau M."/>
            <person name="Medigue C."/>
            <person name="Simonet M."/>
            <person name="Chenal-Francisque V."/>
            <person name="Souza B."/>
            <person name="Dacheux D."/>
            <person name="Elliott J.M."/>
            <person name="Derbise A."/>
            <person name="Hauser L.J."/>
            <person name="Garcia E."/>
        </authorList>
    </citation>
    <scope>NUCLEOTIDE SEQUENCE [LARGE SCALE GENOMIC DNA]</scope>
    <source>
        <strain>IP32953</strain>
    </source>
</reference>
<name>MDTH_YERPS</name>
<keyword id="KW-0997">Cell inner membrane</keyword>
<keyword id="KW-1003">Cell membrane</keyword>
<keyword id="KW-0472">Membrane</keyword>
<keyword id="KW-0812">Transmembrane</keyword>
<keyword id="KW-1133">Transmembrane helix</keyword>
<keyword id="KW-0813">Transport</keyword>
<organism>
    <name type="scientific">Yersinia pseudotuberculosis serotype I (strain IP32953)</name>
    <dbReference type="NCBI Taxonomy" id="273123"/>
    <lineage>
        <taxon>Bacteria</taxon>
        <taxon>Pseudomonadati</taxon>
        <taxon>Pseudomonadota</taxon>
        <taxon>Gammaproteobacteria</taxon>
        <taxon>Enterobacterales</taxon>
        <taxon>Yersiniaceae</taxon>
        <taxon>Yersinia</taxon>
    </lineage>
</organism>
<protein>
    <recommendedName>
        <fullName evidence="1">Multidrug resistance protein MdtH</fullName>
    </recommendedName>
</protein>
<gene>
    <name evidence="1" type="primary">mdtH</name>
    <name type="ordered locus">YPTB2022</name>
</gene>
<accession>Q66AV8</accession>
<dbReference type="EMBL" id="BX936398">
    <property type="protein sequence ID" value="CAH21260.1"/>
    <property type="molecule type" value="Genomic_DNA"/>
</dbReference>
<dbReference type="RefSeq" id="WP_002211217.1">
    <property type="nucleotide sequence ID" value="NZ_CP009712.1"/>
</dbReference>
<dbReference type="SMR" id="Q66AV8"/>
<dbReference type="GeneID" id="57976620"/>
<dbReference type="KEGG" id="ypo:BZ17_443"/>
<dbReference type="KEGG" id="yps:YPTB2022"/>
<dbReference type="PATRIC" id="fig|273123.14.peg.473"/>
<dbReference type="Proteomes" id="UP000001011">
    <property type="component" value="Chromosome"/>
</dbReference>
<dbReference type="GO" id="GO:0005886">
    <property type="term" value="C:plasma membrane"/>
    <property type="evidence" value="ECO:0007669"/>
    <property type="project" value="UniProtKB-SubCell"/>
</dbReference>
<dbReference type="GO" id="GO:0022857">
    <property type="term" value="F:transmembrane transporter activity"/>
    <property type="evidence" value="ECO:0007669"/>
    <property type="project" value="UniProtKB-UniRule"/>
</dbReference>
<dbReference type="CDD" id="cd17329">
    <property type="entry name" value="MFS_MdtH_MDR_like"/>
    <property type="match status" value="1"/>
</dbReference>
<dbReference type="Gene3D" id="1.20.1250.20">
    <property type="entry name" value="MFS general substrate transporter like domains"/>
    <property type="match status" value="1"/>
</dbReference>
<dbReference type="HAMAP" id="MF_01529">
    <property type="entry name" value="MFS_MdtH"/>
    <property type="match status" value="1"/>
</dbReference>
<dbReference type="InterPro" id="IPR011701">
    <property type="entry name" value="MFS"/>
</dbReference>
<dbReference type="InterPro" id="IPR020846">
    <property type="entry name" value="MFS_dom"/>
</dbReference>
<dbReference type="InterPro" id="IPR036259">
    <property type="entry name" value="MFS_trans_sf"/>
</dbReference>
<dbReference type="InterPro" id="IPR050171">
    <property type="entry name" value="MFS_Transporters"/>
</dbReference>
<dbReference type="InterPro" id="IPR022855">
    <property type="entry name" value="Multidrug-R_MdtH"/>
</dbReference>
<dbReference type="NCBIfam" id="NF008650">
    <property type="entry name" value="PRK11646.1"/>
    <property type="match status" value="1"/>
</dbReference>
<dbReference type="PANTHER" id="PTHR23517:SF2">
    <property type="entry name" value="MULTIDRUG RESISTANCE PROTEIN MDTH"/>
    <property type="match status" value="1"/>
</dbReference>
<dbReference type="PANTHER" id="PTHR23517">
    <property type="entry name" value="RESISTANCE PROTEIN MDTM, PUTATIVE-RELATED-RELATED"/>
    <property type="match status" value="1"/>
</dbReference>
<dbReference type="Pfam" id="PF07690">
    <property type="entry name" value="MFS_1"/>
    <property type="match status" value="1"/>
</dbReference>
<dbReference type="SUPFAM" id="SSF103473">
    <property type="entry name" value="MFS general substrate transporter"/>
    <property type="match status" value="1"/>
</dbReference>
<dbReference type="PROSITE" id="PS50850">
    <property type="entry name" value="MFS"/>
    <property type="match status" value="1"/>
</dbReference>